<evidence type="ECO:0000255" key="1">
    <source>
        <dbReference type="HAMAP-Rule" id="MF_00532"/>
    </source>
</evidence>
<evidence type="ECO:0000305" key="2"/>
<sequence>MAITQNYGTGRRKSSTARVFLRKGTGKITVNDRPLDEFFGRETARMIVRQPLELTKNTESFDILVTASGGGTTGQAGAIRLGIARALVEYDETLKSELRKAGFMTRDAREVERKKVGLHKARRATQFSKR</sequence>
<protein>
    <recommendedName>
        <fullName evidence="1">Small ribosomal subunit protein uS9</fullName>
    </recommendedName>
    <alternativeName>
        <fullName evidence="2">30S ribosomal protein S9</fullName>
    </alternativeName>
</protein>
<gene>
    <name evidence="1" type="primary">rpsI</name>
    <name type="ordered locus">XOO3928</name>
</gene>
<dbReference type="EMBL" id="AP008229">
    <property type="protein sequence ID" value="BAE70683.1"/>
    <property type="molecule type" value="Genomic_DNA"/>
</dbReference>
<dbReference type="RefSeq" id="WP_005990700.1">
    <property type="nucleotide sequence ID" value="NC_007705.1"/>
</dbReference>
<dbReference type="SMR" id="Q2NYE4"/>
<dbReference type="GeneID" id="93985751"/>
<dbReference type="KEGG" id="xom:XOO3928"/>
<dbReference type="HOGENOM" id="CLU_046483_2_1_6"/>
<dbReference type="GO" id="GO:0022627">
    <property type="term" value="C:cytosolic small ribosomal subunit"/>
    <property type="evidence" value="ECO:0007669"/>
    <property type="project" value="TreeGrafter"/>
</dbReference>
<dbReference type="GO" id="GO:0003723">
    <property type="term" value="F:RNA binding"/>
    <property type="evidence" value="ECO:0007669"/>
    <property type="project" value="TreeGrafter"/>
</dbReference>
<dbReference type="GO" id="GO:0003735">
    <property type="term" value="F:structural constituent of ribosome"/>
    <property type="evidence" value="ECO:0007669"/>
    <property type="project" value="InterPro"/>
</dbReference>
<dbReference type="GO" id="GO:0006412">
    <property type="term" value="P:translation"/>
    <property type="evidence" value="ECO:0007669"/>
    <property type="project" value="UniProtKB-UniRule"/>
</dbReference>
<dbReference type="FunFam" id="3.30.230.10:FF:000001">
    <property type="entry name" value="30S ribosomal protein S9"/>
    <property type="match status" value="1"/>
</dbReference>
<dbReference type="Gene3D" id="3.30.230.10">
    <property type="match status" value="1"/>
</dbReference>
<dbReference type="HAMAP" id="MF_00532_B">
    <property type="entry name" value="Ribosomal_uS9_B"/>
    <property type="match status" value="1"/>
</dbReference>
<dbReference type="InterPro" id="IPR020568">
    <property type="entry name" value="Ribosomal_Su5_D2-typ_SF"/>
</dbReference>
<dbReference type="InterPro" id="IPR000754">
    <property type="entry name" value="Ribosomal_uS9"/>
</dbReference>
<dbReference type="InterPro" id="IPR023035">
    <property type="entry name" value="Ribosomal_uS9_bac/plastid"/>
</dbReference>
<dbReference type="InterPro" id="IPR020574">
    <property type="entry name" value="Ribosomal_uS9_CS"/>
</dbReference>
<dbReference type="InterPro" id="IPR014721">
    <property type="entry name" value="Ribsml_uS5_D2-typ_fold_subgr"/>
</dbReference>
<dbReference type="NCBIfam" id="NF001099">
    <property type="entry name" value="PRK00132.1"/>
    <property type="match status" value="1"/>
</dbReference>
<dbReference type="PANTHER" id="PTHR21569">
    <property type="entry name" value="RIBOSOMAL PROTEIN S9"/>
    <property type="match status" value="1"/>
</dbReference>
<dbReference type="PANTHER" id="PTHR21569:SF1">
    <property type="entry name" value="SMALL RIBOSOMAL SUBUNIT PROTEIN US9M"/>
    <property type="match status" value="1"/>
</dbReference>
<dbReference type="Pfam" id="PF00380">
    <property type="entry name" value="Ribosomal_S9"/>
    <property type="match status" value="1"/>
</dbReference>
<dbReference type="SUPFAM" id="SSF54211">
    <property type="entry name" value="Ribosomal protein S5 domain 2-like"/>
    <property type="match status" value="1"/>
</dbReference>
<dbReference type="PROSITE" id="PS00360">
    <property type="entry name" value="RIBOSOMAL_S9"/>
    <property type="match status" value="1"/>
</dbReference>
<reference key="1">
    <citation type="journal article" date="2005" name="Jpn. Agric. Res. Q.">
        <title>Genome sequence of Xanthomonas oryzae pv. oryzae suggests contribution of large numbers of effector genes and insertion sequences to its race diversity.</title>
        <authorList>
            <person name="Ochiai H."/>
            <person name="Inoue Y."/>
            <person name="Takeya M."/>
            <person name="Sasaki A."/>
            <person name="Kaku H."/>
        </authorList>
    </citation>
    <scope>NUCLEOTIDE SEQUENCE [LARGE SCALE GENOMIC DNA]</scope>
    <source>
        <strain>MAFF 311018</strain>
    </source>
</reference>
<feature type="chain" id="PRO_1000051366" description="Small ribosomal subunit protein uS9">
    <location>
        <begin position="1"/>
        <end position="130"/>
    </location>
</feature>
<accession>Q2NYE4</accession>
<comment type="similarity">
    <text evidence="1">Belongs to the universal ribosomal protein uS9 family.</text>
</comment>
<keyword id="KW-0687">Ribonucleoprotein</keyword>
<keyword id="KW-0689">Ribosomal protein</keyword>
<name>RS9_XANOM</name>
<organism>
    <name type="scientific">Xanthomonas oryzae pv. oryzae (strain MAFF 311018)</name>
    <dbReference type="NCBI Taxonomy" id="342109"/>
    <lineage>
        <taxon>Bacteria</taxon>
        <taxon>Pseudomonadati</taxon>
        <taxon>Pseudomonadota</taxon>
        <taxon>Gammaproteobacteria</taxon>
        <taxon>Lysobacterales</taxon>
        <taxon>Lysobacteraceae</taxon>
        <taxon>Xanthomonas</taxon>
    </lineage>
</organism>
<proteinExistence type="inferred from homology"/>